<evidence type="ECO:0000255" key="1">
    <source>
        <dbReference type="HAMAP-Rule" id="MF_01380"/>
    </source>
</evidence>
<reference key="1">
    <citation type="submission" date="2007-11" db="EMBL/GenBank/DDBJ databases">
        <title>Genome sequencing of phylogenetically and phenotypically diverse Coxiella burnetii isolates.</title>
        <authorList>
            <person name="Seshadri R."/>
            <person name="Samuel J.E."/>
        </authorList>
    </citation>
    <scope>NUCLEOTIDE SEQUENCE [LARGE SCALE GENOMIC DNA]</scope>
    <source>
        <strain>RSA 331 / Henzerling II</strain>
    </source>
</reference>
<feature type="chain" id="PRO_1000087297" description="Iron-sulfur cluster insertion protein ErpA">
    <location>
        <begin position="1"/>
        <end position="134"/>
    </location>
</feature>
<feature type="binding site" evidence="1">
    <location>
        <position position="47"/>
    </location>
    <ligand>
        <name>iron-sulfur cluster</name>
        <dbReference type="ChEBI" id="CHEBI:30408"/>
    </ligand>
</feature>
<feature type="binding site" evidence="1">
    <location>
        <position position="126"/>
    </location>
    <ligand>
        <name>iron-sulfur cluster</name>
        <dbReference type="ChEBI" id="CHEBI:30408"/>
    </ligand>
</feature>
<feature type="binding site" evidence="1">
    <location>
        <position position="128"/>
    </location>
    <ligand>
        <name>iron-sulfur cluster</name>
        <dbReference type="ChEBI" id="CHEBI:30408"/>
    </ligand>
</feature>
<sequence>MNALAQKTPSPPTLVFTEAAVRKVKGLIDEENNPYLNLRVFITGGGCSGFQYGFTFDEAINSDDLVIEKQLEEEDDDEGGTGQMALVKLLVDPLSLQYLQGAEIDYREDVSGAQFVIRNPNAKTTCGCGSSFAA</sequence>
<gene>
    <name evidence="1" type="primary">erpA</name>
    <name type="ordered locus">COXBURSA331_A2081</name>
</gene>
<keyword id="KW-0408">Iron</keyword>
<keyword id="KW-0411">Iron-sulfur</keyword>
<keyword id="KW-0479">Metal-binding</keyword>
<accession>A9NAW9</accession>
<comment type="function">
    <text evidence="1">Required for insertion of 4Fe-4S clusters for at least IspG.</text>
</comment>
<comment type="cofactor">
    <cofactor evidence="1">
        <name>iron-sulfur cluster</name>
        <dbReference type="ChEBI" id="CHEBI:30408"/>
    </cofactor>
    <text evidence="1">Binds 1 iron-sulfur cluster per subunit.</text>
</comment>
<comment type="subunit">
    <text evidence="1">Homodimer.</text>
</comment>
<comment type="similarity">
    <text evidence="1">Belongs to the HesB/IscA family.</text>
</comment>
<protein>
    <recommendedName>
        <fullName evidence="1">Iron-sulfur cluster insertion protein ErpA</fullName>
    </recommendedName>
</protein>
<dbReference type="EMBL" id="CP000890">
    <property type="protein sequence ID" value="ABX77979.1"/>
    <property type="molecule type" value="Genomic_DNA"/>
</dbReference>
<dbReference type="SMR" id="A9NAW9"/>
<dbReference type="KEGG" id="cbs:COXBURSA331_A2081"/>
<dbReference type="HOGENOM" id="CLU_069054_5_3_6"/>
<dbReference type="GO" id="GO:0005829">
    <property type="term" value="C:cytosol"/>
    <property type="evidence" value="ECO:0007669"/>
    <property type="project" value="TreeGrafter"/>
</dbReference>
<dbReference type="GO" id="GO:0051537">
    <property type="term" value="F:2 iron, 2 sulfur cluster binding"/>
    <property type="evidence" value="ECO:0007669"/>
    <property type="project" value="TreeGrafter"/>
</dbReference>
<dbReference type="GO" id="GO:0051539">
    <property type="term" value="F:4 iron, 4 sulfur cluster binding"/>
    <property type="evidence" value="ECO:0007669"/>
    <property type="project" value="TreeGrafter"/>
</dbReference>
<dbReference type="GO" id="GO:0005506">
    <property type="term" value="F:iron ion binding"/>
    <property type="evidence" value="ECO:0007669"/>
    <property type="project" value="UniProtKB-UniRule"/>
</dbReference>
<dbReference type="GO" id="GO:0016226">
    <property type="term" value="P:iron-sulfur cluster assembly"/>
    <property type="evidence" value="ECO:0007669"/>
    <property type="project" value="UniProtKB-UniRule"/>
</dbReference>
<dbReference type="FunFam" id="2.60.300.12:FF:000002">
    <property type="entry name" value="Iron-sulfur cluster insertion protein ErpA"/>
    <property type="match status" value="1"/>
</dbReference>
<dbReference type="Gene3D" id="2.60.300.12">
    <property type="entry name" value="HesB-like domain"/>
    <property type="match status" value="1"/>
</dbReference>
<dbReference type="HAMAP" id="MF_01380">
    <property type="entry name" value="Fe_S_insert_ErpA"/>
    <property type="match status" value="1"/>
</dbReference>
<dbReference type="InterPro" id="IPR000361">
    <property type="entry name" value="FeS_biogenesis"/>
</dbReference>
<dbReference type="InterPro" id="IPR016092">
    <property type="entry name" value="FeS_cluster_insertion"/>
</dbReference>
<dbReference type="InterPro" id="IPR017870">
    <property type="entry name" value="FeS_cluster_insertion_CS"/>
</dbReference>
<dbReference type="InterPro" id="IPR023063">
    <property type="entry name" value="FeS_cluster_insertion_RrpA"/>
</dbReference>
<dbReference type="InterPro" id="IPR035903">
    <property type="entry name" value="HesB-like_dom_sf"/>
</dbReference>
<dbReference type="NCBIfam" id="TIGR00049">
    <property type="entry name" value="iron-sulfur cluster assembly accessory protein"/>
    <property type="match status" value="1"/>
</dbReference>
<dbReference type="NCBIfam" id="NF010147">
    <property type="entry name" value="PRK13623.1"/>
    <property type="match status" value="1"/>
</dbReference>
<dbReference type="PANTHER" id="PTHR43011">
    <property type="entry name" value="IRON-SULFUR CLUSTER ASSEMBLY 2 HOMOLOG, MITOCHONDRIAL"/>
    <property type="match status" value="1"/>
</dbReference>
<dbReference type="PANTHER" id="PTHR43011:SF1">
    <property type="entry name" value="IRON-SULFUR CLUSTER ASSEMBLY 2 HOMOLOG, MITOCHONDRIAL"/>
    <property type="match status" value="1"/>
</dbReference>
<dbReference type="Pfam" id="PF01521">
    <property type="entry name" value="Fe-S_biosyn"/>
    <property type="match status" value="1"/>
</dbReference>
<dbReference type="SUPFAM" id="SSF89360">
    <property type="entry name" value="HesB-like domain"/>
    <property type="match status" value="1"/>
</dbReference>
<dbReference type="PROSITE" id="PS01152">
    <property type="entry name" value="HESB"/>
    <property type="match status" value="1"/>
</dbReference>
<proteinExistence type="inferred from homology"/>
<organism>
    <name type="scientific">Coxiella burnetii (strain RSA 331 / Henzerling II)</name>
    <dbReference type="NCBI Taxonomy" id="360115"/>
    <lineage>
        <taxon>Bacteria</taxon>
        <taxon>Pseudomonadati</taxon>
        <taxon>Pseudomonadota</taxon>
        <taxon>Gammaproteobacteria</taxon>
        <taxon>Legionellales</taxon>
        <taxon>Coxiellaceae</taxon>
        <taxon>Coxiella</taxon>
    </lineage>
</organism>
<name>ERPA_COXBR</name>